<accession>Q47VL4</accession>
<keyword id="KW-0963">Cytoplasm</keyword>
<keyword id="KW-0342">GTP-binding</keyword>
<keyword id="KW-0378">Hydrolase</keyword>
<keyword id="KW-0460">Magnesium</keyword>
<keyword id="KW-0479">Metal-binding</keyword>
<keyword id="KW-0547">Nucleotide-binding</keyword>
<comment type="function">
    <text evidence="1">An essential GTPase which binds GTP, GDP and possibly (p)ppGpp with moderate affinity, with high nucleotide exchange rates and a fairly low GTP hydrolysis rate. Plays a role in control of the cell cycle, stress response, ribosome biogenesis and in those bacteria that undergo differentiation, in morphogenesis control.</text>
</comment>
<comment type="cofactor">
    <cofactor evidence="1">
        <name>Mg(2+)</name>
        <dbReference type="ChEBI" id="CHEBI:18420"/>
    </cofactor>
</comment>
<comment type="subunit">
    <text evidence="1">Monomer.</text>
</comment>
<comment type="subcellular location">
    <subcellularLocation>
        <location evidence="1">Cytoplasm</location>
    </subcellularLocation>
</comment>
<comment type="similarity">
    <text evidence="1">Belongs to the TRAFAC class OBG-HflX-like GTPase superfamily. OBG GTPase family.</text>
</comment>
<organism>
    <name type="scientific">Colwellia psychrerythraea (strain 34H / ATCC BAA-681)</name>
    <name type="common">Vibrio psychroerythus</name>
    <dbReference type="NCBI Taxonomy" id="167879"/>
    <lineage>
        <taxon>Bacteria</taxon>
        <taxon>Pseudomonadati</taxon>
        <taxon>Pseudomonadota</taxon>
        <taxon>Gammaproteobacteria</taxon>
        <taxon>Alteromonadales</taxon>
        <taxon>Colwelliaceae</taxon>
        <taxon>Colwellia</taxon>
    </lineage>
</organism>
<dbReference type="EC" id="3.6.5.-" evidence="1"/>
<dbReference type="EMBL" id="CP000083">
    <property type="protein sequence ID" value="AAZ27728.1"/>
    <property type="molecule type" value="Genomic_DNA"/>
</dbReference>
<dbReference type="SMR" id="Q47VL4"/>
<dbReference type="STRING" id="167879.CPS_4510"/>
<dbReference type="KEGG" id="cps:CPS_4510"/>
<dbReference type="eggNOG" id="COG0536">
    <property type="taxonomic scope" value="Bacteria"/>
</dbReference>
<dbReference type="HOGENOM" id="CLU_011747_2_0_6"/>
<dbReference type="Proteomes" id="UP000000547">
    <property type="component" value="Chromosome"/>
</dbReference>
<dbReference type="GO" id="GO:0005737">
    <property type="term" value="C:cytoplasm"/>
    <property type="evidence" value="ECO:0007669"/>
    <property type="project" value="UniProtKB-SubCell"/>
</dbReference>
<dbReference type="GO" id="GO:0005525">
    <property type="term" value="F:GTP binding"/>
    <property type="evidence" value="ECO:0007669"/>
    <property type="project" value="UniProtKB-UniRule"/>
</dbReference>
<dbReference type="GO" id="GO:0003924">
    <property type="term" value="F:GTPase activity"/>
    <property type="evidence" value="ECO:0007669"/>
    <property type="project" value="UniProtKB-UniRule"/>
</dbReference>
<dbReference type="GO" id="GO:0000287">
    <property type="term" value="F:magnesium ion binding"/>
    <property type="evidence" value="ECO:0007669"/>
    <property type="project" value="InterPro"/>
</dbReference>
<dbReference type="GO" id="GO:0042254">
    <property type="term" value="P:ribosome biogenesis"/>
    <property type="evidence" value="ECO:0007669"/>
    <property type="project" value="UniProtKB-UniRule"/>
</dbReference>
<dbReference type="CDD" id="cd01898">
    <property type="entry name" value="Obg"/>
    <property type="match status" value="1"/>
</dbReference>
<dbReference type="FunFam" id="2.70.210.12:FF:000001">
    <property type="entry name" value="GTPase Obg"/>
    <property type="match status" value="1"/>
</dbReference>
<dbReference type="Gene3D" id="2.70.210.12">
    <property type="entry name" value="GTP1/OBG domain"/>
    <property type="match status" value="1"/>
</dbReference>
<dbReference type="Gene3D" id="3.40.50.300">
    <property type="entry name" value="P-loop containing nucleotide triphosphate hydrolases"/>
    <property type="match status" value="1"/>
</dbReference>
<dbReference type="HAMAP" id="MF_01454">
    <property type="entry name" value="GTPase_Obg"/>
    <property type="match status" value="1"/>
</dbReference>
<dbReference type="InterPro" id="IPR031167">
    <property type="entry name" value="G_OBG"/>
</dbReference>
<dbReference type="InterPro" id="IPR006073">
    <property type="entry name" value="GTP-bd"/>
</dbReference>
<dbReference type="InterPro" id="IPR014100">
    <property type="entry name" value="GTP-bd_Obg/CgtA"/>
</dbReference>
<dbReference type="InterPro" id="IPR006074">
    <property type="entry name" value="GTP1-OBG_CS"/>
</dbReference>
<dbReference type="InterPro" id="IPR006169">
    <property type="entry name" value="GTP1_OBG_dom"/>
</dbReference>
<dbReference type="InterPro" id="IPR036726">
    <property type="entry name" value="GTP1_OBG_dom_sf"/>
</dbReference>
<dbReference type="InterPro" id="IPR045086">
    <property type="entry name" value="OBG_GTPase"/>
</dbReference>
<dbReference type="InterPro" id="IPR027417">
    <property type="entry name" value="P-loop_NTPase"/>
</dbReference>
<dbReference type="InterPro" id="IPR005225">
    <property type="entry name" value="Small_GTP-bd"/>
</dbReference>
<dbReference type="NCBIfam" id="TIGR02729">
    <property type="entry name" value="Obg_CgtA"/>
    <property type="match status" value="1"/>
</dbReference>
<dbReference type="NCBIfam" id="NF008955">
    <property type="entry name" value="PRK12297.1"/>
    <property type="match status" value="1"/>
</dbReference>
<dbReference type="NCBIfam" id="NF008956">
    <property type="entry name" value="PRK12299.1"/>
    <property type="match status" value="1"/>
</dbReference>
<dbReference type="NCBIfam" id="TIGR00231">
    <property type="entry name" value="small_GTP"/>
    <property type="match status" value="1"/>
</dbReference>
<dbReference type="PANTHER" id="PTHR11702">
    <property type="entry name" value="DEVELOPMENTALLY REGULATED GTP-BINDING PROTEIN-RELATED"/>
    <property type="match status" value="1"/>
</dbReference>
<dbReference type="PANTHER" id="PTHR11702:SF31">
    <property type="entry name" value="MITOCHONDRIAL RIBOSOME-ASSOCIATED GTPASE 2"/>
    <property type="match status" value="1"/>
</dbReference>
<dbReference type="Pfam" id="PF01018">
    <property type="entry name" value="GTP1_OBG"/>
    <property type="match status" value="1"/>
</dbReference>
<dbReference type="Pfam" id="PF01926">
    <property type="entry name" value="MMR_HSR1"/>
    <property type="match status" value="1"/>
</dbReference>
<dbReference type="PIRSF" id="PIRSF002401">
    <property type="entry name" value="GTP_bd_Obg/CgtA"/>
    <property type="match status" value="1"/>
</dbReference>
<dbReference type="PRINTS" id="PR00326">
    <property type="entry name" value="GTP1OBG"/>
</dbReference>
<dbReference type="SUPFAM" id="SSF82051">
    <property type="entry name" value="Obg GTP-binding protein N-terminal domain"/>
    <property type="match status" value="1"/>
</dbReference>
<dbReference type="SUPFAM" id="SSF52540">
    <property type="entry name" value="P-loop containing nucleoside triphosphate hydrolases"/>
    <property type="match status" value="1"/>
</dbReference>
<dbReference type="PROSITE" id="PS51710">
    <property type="entry name" value="G_OBG"/>
    <property type="match status" value="1"/>
</dbReference>
<dbReference type="PROSITE" id="PS00905">
    <property type="entry name" value="GTP1_OBG"/>
    <property type="match status" value="1"/>
</dbReference>
<dbReference type="PROSITE" id="PS51883">
    <property type="entry name" value="OBG"/>
    <property type="match status" value="1"/>
</dbReference>
<gene>
    <name evidence="1" type="primary">obg</name>
    <name type="ordered locus">CPS_4510</name>
</gene>
<name>OBG_COLP3</name>
<protein>
    <recommendedName>
        <fullName evidence="1">GTPase Obg</fullName>
        <ecNumber evidence="1">3.6.5.-</ecNumber>
    </recommendedName>
    <alternativeName>
        <fullName evidence="1">GTP-binding protein Obg</fullName>
    </alternativeName>
</protein>
<proteinExistence type="inferred from homology"/>
<reference key="1">
    <citation type="journal article" date="2005" name="Proc. Natl. Acad. Sci. U.S.A.">
        <title>The psychrophilic lifestyle as revealed by the genome sequence of Colwellia psychrerythraea 34H through genomic and proteomic analyses.</title>
        <authorList>
            <person name="Methe B.A."/>
            <person name="Nelson K.E."/>
            <person name="Deming J.W."/>
            <person name="Momen B."/>
            <person name="Melamud E."/>
            <person name="Zhang X."/>
            <person name="Moult J."/>
            <person name="Madupu R."/>
            <person name="Nelson W.C."/>
            <person name="Dodson R.J."/>
            <person name="Brinkac L.M."/>
            <person name="Daugherty S.C."/>
            <person name="Durkin A.S."/>
            <person name="DeBoy R.T."/>
            <person name="Kolonay J.F."/>
            <person name="Sullivan S.A."/>
            <person name="Zhou L."/>
            <person name="Davidsen T.M."/>
            <person name="Wu M."/>
            <person name="Huston A.L."/>
            <person name="Lewis M."/>
            <person name="Weaver B."/>
            <person name="Weidman J.F."/>
            <person name="Khouri H."/>
            <person name="Utterback T.R."/>
            <person name="Feldblyum T.V."/>
            <person name="Fraser C.M."/>
        </authorList>
    </citation>
    <scope>NUCLEOTIDE SEQUENCE [LARGE SCALE GENOMIC DNA]</scope>
    <source>
        <strain>34H / ATCC BAA-681</strain>
    </source>
</reference>
<evidence type="ECO:0000255" key="1">
    <source>
        <dbReference type="HAMAP-Rule" id="MF_01454"/>
    </source>
</evidence>
<evidence type="ECO:0000255" key="2">
    <source>
        <dbReference type="PROSITE-ProRule" id="PRU01231"/>
    </source>
</evidence>
<evidence type="ECO:0000256" key="3">
    <source>
        <dbReference type="SAM" id="MobiDB-lite"/>
    </source>
</evidence>
<feature type="chain" id="PRO_0000385856" description="GTPase Obg">
    <location>
        <begin position="1"/>
        <end position="387"/>
    </location>
</feature>
<feature type="domain" description="Obg" evidence="2">
    <location>
        <begin position="1"/>
        <end position="159"/>
    </location>
</feature>
<feature type="domain" description="OBG-type G" evidence="1">
    <location>
        <begin position="160"/>
        <end position="333"/>
    </location>
</feature>
<feature type="region of interest" description="Disordered" evidence="3">
    <location>
        <begin position="361"/>
        <end position="387"/>
    </location>
</feature>
<feature type="compositionally biased region" description="Acidic residues" evidence="3">
    <location>
        <begin position="367"/>
        <end position="387"/>
    </location>
</feature>
<feature type="binding site" evidence="1">
    <location>
        <begin position="166"/>
        <end position="173"/>
    </location>
    <ligand>
        <name>GTP</name>
        <dbReference type="ChEBI" id="CHEBI:37565"/>
    </ligand>
</feature>
<feature type="binding site" evidence="1">
    <location>
        <position position="173"/>
    </location>
    <ligand>
        <name>Mg(2+)</name>
        <dbReference type="ChEBI" id="CHEBI:18420"/>
    </ligand>
</feature>
<feature type="binding site" evidence="1">
    <location>
        <begin position="191"/>
        <end position="195"/>
    </location>
    <ligand>
        <name>GTP</name>
        <dbReference type="ChEBI" id="CHEBI:37565"/>
    </ligand>
</feature>
<feature type="binding site" evidence="1">
    <location>
        <position position="193"/>
    </location>
    <ligand>
        <name>Mg(2+)</name>
        <dbReference type="ChEBI" id="CHEBI:18420"/>
    </ligand>
</feature>
<feature type="binding site" evidence="1">
    <location>
        <begin position="213"/>
        <end position="216"/>
    </location>
    <ligand>
        <name>GTP</name>
        <dbReference type="ChEBI" id="CHEBI:37565"/>
    </ligand>
</feature>
<feature type="binding site" evidence="1">
    <location>
        <begin position="283"/>
        <end position="286"/>
    </location>
    <ligand>
        <name>GTP</name>
        <dbReference type="ChEBI" id="CHEBI:37565"/>
    </ligand>
</feature>
<feature type="binding site" evidence="1">
    <location>
        <begin position="314"/>
        <end position="316"/>
    </location>
    <ligand>
        <name>GTP</name>
        <dbReference type="ChEBI" id="CHEBI:37565"/>
    </ligand>
</feature>
<sequence length="387" mass="42726">MKFVDEVEIRVEAGDGGNGCVSFRKEKFIEYGGPNGGDGGDGGDVYLMADEGLNTLIDYRFERFHRAKRGQNGQPQNCTGKGSEDLVLKVPVGTRAVDQDTGEQIGDLTYKGQKMLVAKGGWHGLGNLRFKSSTNRSPRQRTDGTPGEIRSLKLELLLLADVGLLGLPNAGKSTLIRSVSAATPKVADYPFTTLVPNLGVVRLDTQRSFVIADIPGIIEGAADGAGLGTQFLKHLERCRILLHVIDIMPVDGSDPLENAKVIISELEQHNEKLAGKPRWVVFNKLDLVLEEEAKEITDAIIAGLDWKGEVHSISAFNRSGTKELTQKVMTFIEELPPEEEEVIDGKTVEFKWDTYHEETIAAHSQDDDLDDDDWDEDDYDVEVEYRQ</sequence>